<comment type="function">
    <text evidence="1">Catalyzes the synthesis of the hydroxymethylpyrimidine phosphate (HMP-P) moiety of thiamine from aminoimidazole ribotide (AIR) in a radical S-adenosyl-L-methionine (SAM)-dependent reaction.</text>
</comment>
<comment type="catalytic activity">
    <reaction evidence="1">
        <text>5-amino-1-(5-phospho-beta-D-ribosyl)imidazole + S-adenosyl-L-methionine = 4-amino-2-methyl-5-(phosphooxymethyl)pyrimidine + CO + 5'-deoxyadenosine + formate + L-methionine + 3 H(+)</text>
        <dbReference type="Rhea" id="RHEA:24840"/>
        <dbReference type="ChEBI" id="CHEBI:15378"/>
        <dbReference type="ChEBI" id="CHEBI:15740"/>
        <dbReference type="ChEBI" id="CHEBI:17245"/>
        <dbReference type="ChEBI" id="CHEBI:17319"/>
        <dbReference type="ChEBI" id="CHEBI:57844"/>
        <dbReference type="ChEBI" id="CHEBI:58354"/>
        <dbReference type="ChEBI" id="CHEBI:59789"/>
        <dbReference type="ChEBI" id="CHEBI:137981"/>
        <dbReference type="EC" id="4.1.99.17"/>
    </reaction>
</comment>
<comment type="cofactor">
    <cofactor evidence="1">
        <name>[4Fe-4S] cluster</name>
        <dbReference type="ChEBI" id="CHEBI:49883"/>
    </cofactor>
    <text evidence="1">Binds 1 [4Fe-4S] cluster per subunit. The cluster is coordinated with 3 cysteines and an exchangeable S-adenosyl-L-methionine.</text>
</comment>
<comment type="pathway">
    <text evidence="1">Cofactor biosynthesis; thiamine diphosphate biosynthesis.</text>
</comment>
<comment type="subunit">
    <text evidence="1">Homodimer.</text>
</comment>
<comment type="similarity">
    <text evidence="1">Belongs to the ThiC family.</text>
</comment>
<sequence length="463" mass="50212">MRADWIAKRRGQANVSQMHYARSGVVTEEMAFVAARERLEPELVRAEVARGRMVIPANVRHPELEPLAIGITACCKINANIGNSAVTSNIDEELAKLRVCLKYGADTVMDLSTGGDIPQIREAILRASPIPVGTVPIYECLAHVKDVADLTPELMLEIIEAQAAQGVDYMTIHAGVLRDFIPLAAHRITGIVSRGGALMAQWMLANKAENPFFTHFEQICEIFKRYDVTFSLGDGLRPGCLADASDAAQFAELKALGDLTRKAWEHGVQVMVEGPGHVPLDQIPMNMEKERELCSEAPFYVLGPLVTDIAPGYDHITSAIGAAVAAQHGAAMLCYVTPAEHLGLPDIDDVREGIVAYKIAAHAADVARHRPGARDRDDALSRARYAFDWNKQFELSLDPDTARAKHDETLPHEAFKSAEFCSMCGPKFCSMKIHGHLAEAAAAQDAAANGEAEKPAGGLQVLP</sequence>
<name>THIC_ANAD2</name>
<gene>
    <name evidence="1" type="primary">thiC</name>
    <name type="ordered locus">A2cp1_2304</name>
</gene>
<accession>B8JAC3</accession>
<keyword id="KW-0004">4Fe-4S</keyword>
<keyword id="KW-0408">Iron</keyword>
<keyword id="KW-0411">Iron-sulfur</keyword>
<keyword id="KW-0456">Lyase</keyword>
<keyword id="KW-0479">Metal-binding</keyword>
<keyword id="KW-0949">S-adenosyl-L-methionine</keyword>
<keyword id="KW-0784">Thiamine biosynthesis</keyword>
<keyword id="KW-0862">Zinc</keyword>
<evidence type="ECO:0000255" key="1">
    <source>
        <dbReference type="HAMAP-Rule" id="MF_00089"/>
    </source>
</evidence>
<dbReference type="EC" id="4.1.99.17" evidence="1"/>
<dbReference type="EMBL" id="CP001359">
    <property type="protein sequence ID" value="ACL65642.1"/>
    <property type="molecule type" value="Genomic_DNA"/>
</dbReference>
<dbReference type="RefSeq" id="WP_012633476.1">
    <property type="nucleotide sequence ID" value="NC_011891.1"/>
</dbReference>
<dbReference type="SMR" id="B8JAC3"/>
<dbReference type="KEGG" id="acp:A2cp1_2304"/>
<dbReference type="HOGENOM" id="CLU_013181_2_2_7"/>
<dbReference type="UniPathway" id="UPA00060"/>
<dbReference type="Proteomes" id="UP000007089">
    <property type="component" value="Chromosome"/>
</dbReference>
<dbReference type="GO" id="GO:0005829">
    <property type="term" value="C:cytosol"/>
    <property type="evidence" value="ECO:0007669"/>
    <property type="project" value="TreeGrafter"/>
</dbReference>
<dbReference type="GO" id="GO:0051539">
    <property type="term" value="F:4 iron, 4 sulfur cluster binding"/>
    <property type="evidence" value="ECO:0007669"/>
    <property type="project" value="UniProtKB-KW"/>
</dbReference>
<dbReference type="GO" id="GO:0016830">
    <property type="term" value="F:carbon-carbon lyase activity"/>
    <property type="evidence" value="ECO:0007669"/>
    <property type="project" value="InterPro"/>
</dbReference>
<dbReference type="GO" id="GO:0008270">
    <property type="term" value="F:zinc ion binding"/>
    <property type="evidence" value="ECO:0007669"/>
    <property type="project" value="UniProtKB-UniRule"/>
</dbReference>
<dbReference type="GO" id="GO:0009228">
    <property type="term" value="P:thiamine biosynthetic process"/>
    <property type="evidence" value="ECO:0007669"/>
    <property type="project" value="UniProtKB-KW"/>
</dbReference>
<dbReference type="GO" id="GO:0009229">
    <property type="term" value="P:thiamine diphosphate biosynthetic process"/>
    <property type="evidence" value="ECO:0007669"/>
    <property type="project" value="UniProtKB-UniRule"/>
</dbReference>
<dbReference type="FunFam" id="3.20.20.540:FF:000001">
    <property type="entry name" value="Phosphomethylpyrimidine synthase"/>
    <property type="match status" value="1"/>
</dbReference>
<dbReference type="Gene3D" id="6.10.250.620">
    <property type="match status" value="1"/>
</dbReference>
<dbReference type="Gene3D" id="3.20.20.540">
    <property type="entry name" value="Radical SAM ThiC family, central domain"/>
    <property type="match status" value="1"/>
</dbReference>
<dbReference type="HAMAP" id="MF_00089">
    <property type="entry name" value="ThiC"/>
    <property type="match status" value="1"/>
</dbReference>
<dbReference type="InterPro" id="IPR037509">
    <property type="entry name" value="ThiC"/>
</dbReference>
<dbReference type="InterPro" id="IPR038521">
    <property type="entry name" value="ThiC/Bza_core_dom"/>
</dbReference>
<dbReference type="InterPro" id="IPR002817">
    <property type="entry name" value="ThiC/BzaA/B"/>
</dbReference>
<dbReference type="NCBIfam" id="NF006763">
    <property type="entry name" value="PRK09284.1"/>
    <property type="match status" value="1"/>
</dbReference>
<dbReference type="NCBIfam" id="NF009895">
    <property type="entry name" value="PRK13352.1"/>
    <property type="match status" value="1"/>
</dbReference>
<dbReference type="NCBIfam" id="TIGR00190">
    <property type="entry name" value="thiC"/>
    <property type="match status" value="1"/>
</dbReference>
<dbReference type="PANTHER" id="PTHR30557:SF1">
    <property type="entry name" value="PHOSPHOMETHYLPYRIMIDINE SYNTHASE, CHLOROPLASTIC"/>
    <property type="match status" value="1"/>
</dbReference>
<dbReference type="PANTHER" id="PTHR30557">
    <property type="entry name" value="THIAMINE BIOSYNTHESIS PROTEIN THIC"/>
    <property type="match status" value="1"/>
</dbReference>
<dbReference type="Pfam" id="PF01964">
    <property type="entry name" value="ThiC_Rad_SAM"/>
    <property type="match status" value="1"/>
</dbReference>
<dbReference type="SFLD" id="SFLDF00407">
    <property type="entry name" value="phosphomethylpyrimidine_syntha"/>
    <property type="match status" value="1"/>
</dbReference>
<dbReference type="SFLD" id="SFLDG01114">
    <property type="entry name" value="phosphomethylpyrimidine_syntha"/>
    <property type="match status" value="1"/>
</dbReference>
<dbReference type="SFLD" id="SFLDS00113">
    <property type="entry name" value="Radical_SAM_Phosphomethylpyrim"/>
    <property type="match status" value="1"/>
</dbReference>
<protein>
    <recommendedName>
        <fullName evidence="1">Phosphomethylpyrimidine synthase</fullName>
        <ecNumber evidence="1">4.1.99.17</ecNumber>
    </recommendedName>
    <alternativeName>
        <fullName evidence="1">Hydroxymethylpyrimidine phosphate synthase</fullName>
        <shortName evidence="1">HMP-P synthase</shortName>
        <shortName evidence="1">HMP-phosphate synthase</shortName>
        <shortName evidence="1">HMPP synthase</shortName>
    </alternativeName>
    <alternativeName>
        <fullName evidence="1">Thiamine biosynthesis protein ThiC</fullName>
    </alternativeName>
</protein>
<proteinExistence type="inferred from homology"/>
<organism>
    <name type="scientific">Anaeromyxobacter dehalogenans (strain 2CP-1 / ATCC BAA-258)</name>
    <dbReference type="NCBI Taxonomy" id="455488"/>
    <lineage>
        <taxon>Bacteria</taxon>
        <taxon>Pseudomonadati</taxon>
        <taxon>Myxococcota</taxon>
        <taxon>Myxococcia</taxon>
        <taxon>Myxococcales</taxon>
        <taxon>Cystobacterineae</taxon>
        <taxon>Anaeromyxobacteraceae</taxon>
        <taxon>Anaeromyxobacter</taxon>
    </lineage>
</organism>
<reference key="1">
    <citation type="submission" date="2009-01" db="EMBL/GenBank/DDBJ databases">
        <title>Complete sequence of Anaeromyxobacter dehalogenans 2CP-1.</title>
        <authorList>
            <person name="Lucas S."/>
            <person name="Copeland A."/>
            <person name="Lapidus A."/>
            <person name="Glavina del Rio T."/>
            <person name="Dalin E."/>
            <person name="Tice H."/>
            <person name="Bruce D."/>
            <person name="Goodwin L."/>
            <person name="Pitluck S."/>
            <person name="Saunders E."/>
            <person name="Brettin T."/>
            <person name="Detter J.C."/>
            <person name="Han C."/>
            <person name="Larimer F."/>
            <person name="Land M."/>
            <person name="Hauser L."/>
            <person name="Kyrpides N."/>
            <person name="Ovchinnikova G."/>
            <person name="Beliaev A.S."/>
            <person name="Richardson P."/>
        </authorList>
    </citation>
    <scope>NUCLEOTIDE SEQUENCE [LARGE SCALE GENOMIC DNA]</scope>
    <source>
        <strain>2CP-1 / ATCC BAA-258</strain>
    </source>
</reference>
<feature type="chain" id="PRO_1000118498" description="Phosphomethylpyrimidine synthase">
    <location>
        <begin position="1"/>
        <end position="463"/>
    </location>
</feature>
<feature type="binding site" evidence="1">
    <location>
        <position position="80"/>
    </location>
    <ligand>
        <name>substrate</name>
    </ligand>
</feature>
<feature type="binding site" evidence="1">
    <location>
        <position position="109"/>
    </location>
    <ligand>
        <name>substrate</name>
    </ligand>
</feature>
<feature type="binding site" evidence="1">
    <location>
        <position position="138"/>
    </location>
    <ligand>
        <name>substrate</name>
    </ligand>
</feature>
<feature type="binding site" evidence="1">
    <location>
        <position position="173"/>
    </location>
    <ligand>
        <name>substrate</name>
    </ligand>
</feature>
<feature type="binding site" evidence="1">
    <location>
        <begin position="193"/>
        <end position="195"/>
    </location>
    <ligand>
        <name>substrate</name>
    </ligand>
</feature>
<feature type="binding site" evidence="1">
    <location>
        <begin position="234"/>
        <end position="237"/>
    </location>
    <ligand>
        <name>substrate</name>
    </ligand>
</feature>
<feature type="binding site" evidence="1">
    <location>
        <position position="273"/>
    </location>
    <ligand>
        <name>substrate</name>
    </ligand>
</feature>
<feature type="binding site" evidence="1">
    <location>
        <position position="277"/>
    </location>
    <ligand>
        <name>Zn(2+)</name>
        <dbReference type="ChEBI" id="CHEBI:29105"/>
    </ligand>
</feature>
<feature type="binding site" evidence="1">
    <location>
        <position position="300"/>
    </location>
    <ligand>
        <name>substrate</name>
    </ligand>
</feature>
<feature type="binding site" evidence="1">
    <location>
        <position position="341"/>
    </location>
    <ligand>
        <name>Zn(2+)</name>
        <dbReference type="ChEBI" id="CHEBI:29105"/>
    </ligand>
</feature>
<feature type="binding site" evidence="1">
    <location>
        <position position="421"/>
    </location>
    <ligand>
        <name>[4Fe-4S] cluster</name>
        <dbReference type="ChEBI" id="CHEBI:49883"/>
        <note>4Fe-4S-S-AdoMet</note>
    </ligand>
</feature>
<feature type="binding site" evidence="1">
    <location>
        <position position="424"/>
    </location>
    <ligand>
        <name>[4Fe-4S] cluster</name>
        <dbReference type="ChEBI" id="CHEBI:49883"/>
        <note>4Fe-4S-S-AdoMet</note>
    </ligand>
</feature>
<feature type="binding site" evidence="1">
    <location>
        <position position="429"/>
    </location>
    <ligand>
        <name>[4Fe-4S] cluster</name>
        <dbReference type="ChEBI" id="CHEBI:49883"/>
        <note>4Fe-4S-S-AdoMet</note>
    </ligand>
</feature>